<accession>B8ELJ7</accession>
<gene>
    <name evidence="1" type="primary">panD</name>
    <name type="ordered locus">Msil_1022</name>
</gene>
<keyword id="KW-0068">Autocatalytic cleavage</keyword>
<keyword id="KW-0963">Cytoplasm</keyword>
<keyword id="KW-0210">Decarboxylase</keyword>
<keyword id="KW-0456">Lyase</keyword>
<keyword id="KW-0566">Pantothenate biosynthesis</keyword>
<keyword id="KW-0670">Pyruvate</keyword>
<keyword id="KW-1185">Reference proteome</keyword>
<keyword id="KW-0704">Schiff base</keyword>
<keyword id="KW-0865">Zymogen</keyword>
<dbReference type="EC" id="4.1.1.11" evidence="1"/>
<dbReference type="EMBL" id="CP001280">
    <property type="protein sequence ID" value="ACK49991.1"/>
    <property type="molecule type" value="Genomic_DNA"/>
</dbReference>
<dbReference type="RefSeq" id="WP_012590061.1">
    <property type="nucleotide sequence ID" value="NC_011666.1"/>
</dbReference>
<dbReference type="SMR" id="B8ELJ7"/>
<dbReference type="STRING" id="395965.Msil_1022"/>
<dbReference type="KEGG" id="msl:Msil_1022"/>
<dbReference type="eggNOG" id="COG0853">
    <property type="taxonomic scope" value="Bacteria"/>
</dbReference>
<dbReference type="HOGENOM" id="CLU_115305_1_0_5"/>
<dbReference type="OrthoDB" id="9803983at2"/>
<dbReference type="UniPathway" id="UPA00028">
    <property type="reaction ID" value="UER00002"/>
</dbReference>
<dbReference type="Proteomes" id="UP000002257">
    <property type="component" value="Chromosome"/>
</dbReference>
<dbReference type="GO" id="GO:0005829">
    <property type="term" value="C:cytosol"/>
    <property type="evidence" value="ECO:0007669"/>
    <property type="project" value="TreeGrafter"/>
</dbReference>
<dbReference type="GO" id="GO:0004068">
    <property type="term" value="F:aspartate 1-decarboxylase activity"/>
    <property type="evidence" value="ECO:0007669"/>
    <property type="project" value="UniProtKB-UniRule"/>
</dbReference>
<dbReference type="GO" id="GO:0006523">
    <property type="term" value="P:alanine biosynthetic process"/>
    <property type="evidence" value="ECO:0007669"/>
    <property type="project" value="InterPro"/>
</dbReference>
<dbReference type="GO" id="GO:0015940">
    <property type="term" value="P:pantothenate biosynthetic process"/>
    <property type="evidence" value="ECO:0007669"/>
    <property type="project" value="UniProtKB-UniRule"/>
</dbReference>
<dbReference type="CDD" id="cd06919">
    <property type="entry name" value="Asp_decarbox"/>
    <property type="match status" value="1"/>
</dbReference>
<dbReference type="Gene3D" id="2.40.40.20">
    <property type="match status" value="1"/>
</dbReference>
<dbReference type="HAMAP" id="MF_00446">
    <property type="entry name" value="PanD"/>
    <property type="match status" value="1"/>
</dbReference>
<dbReference type="InterPro" id="IPR009010">
    <property type="entry name" value="Asp_de-COase-like_dom_sf"/>
</dbReference>
<dbReference type="InterPro" id="IPR003190">
    <property type="entry name" value="Asp_decarbox"/>
</dbReference>
<dbReference type="NCBIfam" id="TIGR00223">
    <property type="entry name" value="panD"/>
    <property type="match status" value="1"/>
</dbReference>
<dbReference type="PANTHER" id="PTHR21012">
    <property type="entry name" value="ASPARTATE 1-DECARBOXYLASE"/>
    <property type="match status" value="1"/>
</dbReference>
<dbReference type="PANTHER" id="PTHR21012:SF0">
    <property type="entry name" value="ASPARTATE 1-DECARBOXYLASE"/>
    <property type="match status" value="1"/>
</dbReference>
<dbReference type="Pfam" id="PF02261">
    <property type="entry name" value="Asp_decarbox"/>
    <property type="match status" value="1"/>
</dbReference>
<dbReference type="SUPFAM" id="SSF50692">
    <property type="entry name" value="ADC-like"/>
    <property type="match status" value="1"/>
</dbReference>
<sequence length="155" mass="16809">MRKLVGGKLHGIRVTESNLEYHGSITLDPAHCEAAGILPLEFVEIWNKNSGARITTYVILGQRGSRCCVLNGAAARTCQPGDELIICSSVYLDGAEITNLSPAVLTFDANNNIVERLHYSVTRDGAGHYQFGIVAEDGEILQPPLKSGMRQKRAS</sequence>
<comment type="function">
    <text evidence="1">Catalyzes the pyruvoyl-dependent decarboxylation of aspartate to produce beta-alanine.</text>
</comment>
<comment type="catalytic activity">
    <reaction evidence="1">
        <text>L-aspartate + H(+) = beta-alanine + CO2</text>
        <dbReference type="Rhea" id="RHEA:19497"/>
        <dbReference type="ChEBI" id="CHEBI:15378"/>
        <dbReference type="ChEBI" id="CHEBI:16526"/>
        <dbReference type="ChEBI" id="CHEBI:29991"/>
        <dbReference type="ChEBI" id="CHEBI:57966"/>
        <dbReference type="EC" id="4.1.1.11"/>
    </reaction>
</comment>
<comment type="cofactor">
    <cofactor evidence="1">
        <name>pyruvate</name>
        <dbReference type="ChEBI" id="CHEBI:15361"/>
    </cofactor>
    <text evidence="1">Binds 1 pyruvoyl group covalently per subunit.</text>
</comment>
<comment type="pathway">
    <text evidence="1">Cofactor biosynthesis; (R)-pantothenate biosynthesis; beta-alanine from L-aspartate: step 1/1.</text>
</comment>
<comment type="subunit">
    <text evidence="1">Heterooctamer of four alpha and four beta subunits.</text>
</comment>
<comment type="subcellular location">
    <subcellularLocation>
        <location evidence="1">Cytoplasm</location>
    </subcellularLocation>
</comment>
<comment type="PTM">
    <text evidence="1">Is synthesized initially as an inactive proenzyme, which is activated by self-cleavage at a specific serine bond to produce a beta-subunit with a hydroxyl group at its C-terminus and an alpha-subunit with a pyruvoyl group at its N-terminus.</text>
</comment>
<comment type="similarity">
    <text evidence="1">Belongs to the PanD family.</text>
</comment>
<feature type="chain" id="PRO_1000192013" description="Aspartate 1-decarboxylase beta chain" evidence="1">
    <location>
        <begin position="1"/>
        <end position="23"/>
    </location>
</feature>
<feature type="chain" id="PRO_1000192014" description="Aspartate 1-decarboxylase alpha chain" evidence="1">
    <location>
        <begin position="24"/>
        <end position="155"/>
    </location>
</feature>
<feature type="active site" description="Schiff-base intermediate with substrate; via pyruvic acid" evidence="1">
    <location>
        <position position="24"/>
    </location>
</feature>
<feature type="active site" description="Proton donor" evidence="1">
    <location>
        <position position="57"/>
    </location>
</feature>
<feature type="binding site" evidence="1">
    <location>
        <position position="56"/>
    </location>
    <ligand>
        <name>substrate</name>
    </ligand>
</feature>
<feature type="binding site" evidence="1">
    <location>
        <begin position="72"/>
        <end position="74"/>
    </location>
    <ligand>
        <name>substrate</name>
    </ligand>
</feature>
<feature type="modified residue" description="Pyruvic acid (Ser)" evidence="1">
    <location>
        <position position="24"/>
    </location>
</feature>
<organism>
    <name type="scientific">Methylocella silvestris (strain DSM 15510 / CIP 108128 / LMG 27833 / NCIMB 13906 / BL2)</name>
    <dbReference type="NCBI Taxonomy" id="395965"/>
    <lineage>
        <taxon>Bacteria</taxon>
        <taxon>Pseudomonadati</taxon>
        <taxon>Pseudomonadota</taxon>
        <taxon>Alphaproteobacteria</taxon>
        <taxon>Hyphomicrobiales</taxon>
        <taxon>Beijerinckiaceae</taxon>
        <taxon>Methylocella</taxon>
    </lineage>
</organism>
<protein>
    <recommendedName>
        <fullName evidence="1">Aspartate 1-decarboxylase</fullName>
        <ecNumber evidence="1">4.1.1.11</ecNumber>
    </recommendedName>
    <alternativeName>
        <fullName evidence="1">Aspartate alpha-decarboxylase</fullName>
    </alternativeName>
    <component>
        <recommendedName>
            <fullName evidence="1">Aspartate 1-decarboxylase beta chain</fullName>
        </recommendedName>
    </component>
    <component>
        <recommendedName>
            <fullName evidence="1">Aspartate 1-decarboxylase alpha chain</fullName>
        </recommendedName>
    </component>
</protein>
<reference key="1">
    <citation type="journal article" date="2010" name="J. Bacteriol.">
        <title>Complete genome sequence of the aerobic facultative methanotroph Methylocella silvestris BL2.</title>
        <authorList>
            <person name="Chen Y."/>
            <person name="Crombie A."/>
            <person name="Rahman M.T."/>
            <person name="Dedysh S.N."/>
            <person name="Liesack W."/>
            <person name="Stott M.B."/>
            <person name="Alam M."/>
            <person name="Theisen A.R."/>
            <person name="Murrell J.C."/>
            <person name="Dunfield P.F."/>
        </authorList>
    </citation>
    <scope>NUCLEOTIDE SEQUENCE [LARGE SCALE GENOMIC DNA]</scope>
    <source>
        <strain>DSM 15510 / CIP 108128 / LMG 27833 / NCIMB 13906 / BL2</strain>
    </source>
</reference>
<name>PAND_METSB</name>
<proteinExistence type="inferred from homology"/>
<evidence type="ECO:0000255" key="1">
    <source>
        <dbReference type="HAMAP-Rule" id="MF_00446"/>
    </source>
</evidence>